<evidence type="ECO:0000250" key="1"/>
<evidence type="ECO:0000269" key="2">
    <source>
    </source>
</evidence>
<evidence type="ECO:0000269" key="3">
    <source>
    </source>
</evidence>
<evidence type="ECO:0000269" key="4">
    <source>
    </source>
</evidence>
<evidence type="ECO:0000269" key="5">
    <source>
    </source>
</evidence>
<evidence type="ECO:0000269" key="6">
    <source>
    </source>
</evidence>
<evidence type="ECO:0000305" key="7"/>
<gene>
    <name type="primary">RIM13</name>
    <name type="synonym">CPL1</name>
    <name type="ordered locus">YMR154C</name>
    <name type="ORF">YM8520.03C</name>
</gene>
<name>RIM13_YEAST</name>
<proteinExistence type="evidence at protein level"/>
<comment type="function">
    <text evidence="2 5 6">Required for the proteolytic cleavage of the transcriptional repressor RIM101 in response to alkaline ambient pH, which is necessary for sporulation and invasive growth. Probably the protease that cleaves RIM101.</text>
</comment>
<comment type="subunit">
    <text evidence="3">Interacts with SNF7, which may act together with RIM20 as a scaffold to recruit RIM13 to its substrate RIM101.</text>
</comment>
<comment type="miscellaneous">
    <text evidence="4">Present with 432 molecules/cell in log phase SD medium.</text>
</comment>
<comment type="similarity">
    <text evidence="7">Belongs to the peptidase C2 family. PalB/RIM13 subfamily.</text>
</comment>
<feature type="chain" id="PRO_0000207746" description="Calpain-like protease 1">
    <location>
        <begin position="1"/>
        <end position="727"/>
    </location>
</feature>
<feature type="domain" description="Calpain catalytic">
    <location>
        <begin position="70"/>
        <end position="317"/>
    </location>
</feature>
<feature type="active site" evidence="1">
    <location>
        <position position="128"/>
    </location>
</feature>
<feature type="active site" evidence="1">
    <location>
        <position position="271"/>
    </location>
</feature>
<feature type="active site" evidence="1">
    <location>
        <position position="296"/>
    </location>
</feature>
<feature type="mutagenesis site" description="Loss of function." evidence="6">
    <original>C</original>
    <variation>S</variation>
    <location>
        <position position="128"/>
    </location>
</feature>
<reference key="1">
    <citation type="journal article" date="1997" name="Nature">
        <title>The nucleotide sequence of Saccharomyces cerevisiae chromosome XIII.</title>
        <authorList>
            <person name="Bowman S."/>
            <person name="Churcher C.M."/>
            <person name="Badcock K."/>
            <person name="Brown D."/>
            <person name="Chillingworth T."/>
            <person name="Connor R."/>
            <person name="Dedman K."/>
            <person name="Devlin K."/>
            <person name="Gentles S."/>
            <person name="Hamlin N."/>
            <person name="Hunt S."/>
            <person name="Jagels K."/>
            <person name="Lye G."/>
            <person name="Moule S."/>
            <person name="Odell C."/>
            <person name="Pearson D."/>
            <person name="Rajandream M.A."/>
            <person name="Rice P."/>
            <person name="Skelton J."/>
            <person name="Walsh S.V."/>
            <person name="Whitehead S."/>
            <person name="Barrell B.G."/>
        </authorList>
    </citation>
    <scope>NUCLEOTIDE SEQUENCE [LARGE SCALE GENOMIC DNA]</scope>
    <source>
        <strain>ATCC 204508 / S288c</strain>
    </source>
</reference>
<reference key="2">
    <citation type="journal article" date="2014" name="G3 (Bethesda)">
        <title>The reference genome sequence of Saccharomyces cerevisiae: Then and now.</title>
        <authorList>
            <person name="Engel S.R."/>
            <person name="Dietrich F.S."/>
            <person name="Fisk D.G."/>
            <person name="Binkley G."/>
            <person name="Balakrishnan R."/>
            <person name="Costanzo M.C."/>
            <person name="Dwight S.S."/>
            <person name="Hitz B.C."/>
            <person name="Karra K."/>
            <person name="Nash R.S."/>
            <person name="Weng S."/>
            <person name="Wong E.D."/>
            <person name="Lloyd P."/>
            <person name="Skrzypek M.S."/>
            <person name="Miyasato S.R."/>
            <person name="Simison M."/>
            <person name="Cherry J.M."/>
        </authorList>
    </citation>
    <scope>GENOME REANNOTATION</scope>
    <source>
        <strain>ATCC 204508 / S288c</strain>
    </source>
</reference>
<reference key="3">
    <citation type="journal article" date="1997" name="Genetics">
        <title>Proteolytic activation of Rim1p, a positive regulator of yeast sporulation and invasive growth.</title>
        <authorList>
            <person name="Li W."/>
            <person name="Mitchell A.P."/>
        </authorList>
    </citation>
    <scope>FUNCTION</scope>
</reference>
<reference key="4">
    <citation type="journal article" date="1999" name="Mol. Gen. Genet.">
        <title>The protease activity of a calpain-like cysteine protease in Saccharomyces cerevisiae is required for alkaline adaptation and sporulation.</title>
        <authorList>
            <person name="Futai E."/>
            <person name="Maeda T."/>
            <person name="Sorimachi H."/>
            <person name="Kitamoto K."/>
            <person name="Ishiura S."/>
            <person name="Suzuki K."/>
        </authorList>
    </citation>
    <scope>FUNCTION</scope>
    <scope>MUTAGENESIS OF CYS-128</scope>
</reference>
<reference key="5">
    <citation type="journal article" date="2001" name="J. Biol. Chem.">
        <title>Alkaline response genes of Saccharomyces cerevisiae and their relationship to the RIM101 pathway.</title>
        <authorList>
            <person name="Lamb T.M."/>
            <person name="Xu W."/>
            <person name="Diamond A."/>
            <person name="Mitchell A.P."/>
        </authorList>
    </citation>
    <scope>FUNCTION</scope>
</reference>
<reference key="6">
    <citation type="journal article" date="2001" name="Proc. Natl. Acad. Sci. U.S.A.">
        <title>A comprehensive two-hybrid analysis to explore the yeast protein interactome.</title>
        <authorList>
            <person name="Ito T."/>
            <person name="Chiba T."/>
            <person name="Ozawa R."/>
            <person name="Yoshida M."/>
            <person name="Hattori M."/>
            <person name="Sakaki Y."/>
        </authorList>
    </citation>
    <scope>INTERACTION WITH SNF7</scope>
</reference>
<reference key="7">
    <citation type="journal article" date="2003" name="Nature">
        <title>Global analysis of protein expression in yeast.</title>
        <authorList>
            <person name="Ghaemmaghami S."/>
            <person name="Huh W.-K."/>
            <person name="Bower K."/>
            <person name="Howson R.W."/>
            <person name="Belle A."/>
            <person name="Dephoure N."/>
            <person name="O'Shea E.K."/>
            <person name="Weissman J.S."/>
        </authorList>
    </citation>
    <scope>LEVEL OF PROTEIN EXPRESSION [LARGE SCALE ANALYSIS]</scope>
</reference>
<dbReference type="EC" id="3.4.22.-"/>
<dbReference type="EMBL" id="Z49705">
    <property type="protein sequence ID" value="CAA89790.1"/>
    <property type="molecule type" value="Genomic_DNA"/>
</dbReference>
<dbReference type="EMBL" id="BK006946">
    <property type="protein sequence ID" value="DAA10049.1"/>
    <property type="molecule type" value="Genomic_DNA"/>
</dbReference>
<dbReference type="PIR" id="S54512">
    <property type="entry name" value="S54512"/>
</dbReference>
<dbReference type="RefSeq" id="NP_013875.1">
    <property type="nucleotide sequence ID" value="NM_001182657.1"/>
</dbReference>
<dbReference type="BioGRID" id="35329">
    <property type="interactions" value="399"/>
</dbReference>
<dbReference type="DIP" id="DIP-2809N"/>
<dbReference type="FunCoup" id="Q03792">
    <property type="interactions" value="43"/>
</dbReference>
<dbReference type="IntAct" id="Q03792">
    <property type="interactions" value="2"/>
</dbReference>
<dbReference type="MINT" id="Q03792"/>
<dbReference type="STRING" id="4932.YMR154C"/>
<dbReference type="MEROPS" id="C02.030"/>
<dbReference type="iPTMnet" id="Q03792"/>
<dbReference type="PaxDb" id="4932-YMR154C"/>
<dbReference type="PeptideAtlas" id="Q03792"/>
<dbReference type="EnsemblFungi" id="YMR154C_mRNA">
    <property type="protein sequence ID" value="YMR154C"/>
    <property type="gene ID" value="YMR154C"/>
</dbReference>
<dbReference type="GeneID" id="855186"/>
<dbReference type="KEGG" id="sce:YMR154C"/>
<dbReference type="AGR" id="SGD:S000004763"/>
<dbReference type="SGD" id="S000004763">
    <property type="gene designation" value="RIM13"/>
</dbReference>
<dbReference type="VEuPathDB" id="FungiDB:YMR154C"/>
<dbReference type="eggNOG" id="KOG0045">
    <property type="taxonomic scope" value="Eukaryota"/>
</dbReference>
<dbReference type="HOGENOM" id="CLU_395483_0_0_1"/>
<dbReference type="InParanoid" id="Q03792"/>
<dbReference type="OMA" id="GWLPQII"/>
<dbReference type="OrthoDB" id="167576at2759"/>
<dbReference type="BioCyc" id="YEAST:G3O-32844-MONOMER"/>
<dbReference type="BioGRID-ORCS" id="855186">
    <property type="hits" value="0 hits in 10 CRISPR screens"/>
</dbReference>
<dbReference type="PRO" id="PR:Q03792"/>
<dbReference type="Proteomes" id="UP000002311">
    <property type="component" value="Chromosome XIII"/>
</dbReference>
<dbReference type="RNAct" id="Q03792">
    <property type="molecule type" value="protein"/>
</dbReference>
<dbReference type="GO" id="GO:0004198">
    <property type="term" value="F:calcium-dependent cysteine-type endopeptidase activity"/>
    <property type="evidence" value="ECO:0007669"/>
    <property type="project" value="InterPro"/>
</dbReference>
<dbReference type="GO" id="GO:0004197">
    <property type="term" value="F:cysteine-type endopeptidase activity"/>
    <property type="evidence" value="ECO:0000314"/>
    <property type="project" value="SGD"/>
</dbReference>
<dbReference type="GO" id="GO:0016485">
    <property type="term" value="P:protein processing"/>
    <property type="evidence" value="ECO:0000315"/>
    <property type="project" value="SGD"/>
</dbReference>
<dbReference type="GO" id="GO:0006508">
    <property type="term" value="P:proteolysis"/>
    <property type="evidence" value="ECO:0000318"/>
    <property type="project" value="GO_Central"/>
</dbReference>
<dbReference type="InterPro" id="IPR051297">
    <property type="entry name" value="PalB/RIM13_Calpain-like"/>
</dbReference>
<dbReference type="InterPro" id="IPR038765">
    <property type="entry name" value="Papain-like_cys_pep_sf"/>
</dbReference>
<dbReference type="InterPro" id="IPR001300">
    <property type="entry name" value="Peptidase_C2_calpain_cat"/>
</dbReference>
<dbReference type="PANTHER" id="PTHR46143">
    <property type="entry name" value="CALPAIN-7"/>
    <property type="match status" value="1"/>
</dbReference>
<dbReference type="PANTHER" id="PTHR46143:SF1">
    <property type="entry name" value="CALPAIN-7"/>
    <property type="match status" value="1"/>
</dbReference>
<dbReference type="SMART" id="SM00230">
    <property type="entry name" value="CysPc"/>
    <property type="match status" value="1"/>
</dbReference>
<dbReference type="SUPFAM" id="SSF54001">
    <property type="entry name" value="Cysteine proteinases"/>
    <property type="match status" value="1"/>
</dbReference>
<sequence length="727" mass="83124">MNDWHEFNAAIKSIYCNAEGDSSSIINRLVGLAMKSEDSTFIEAVLVLKENVSKVDKQLRFLWLTSTINSRFYPPIPISEASPVSWNKTEYCAPGTEELQRRYPGRAKLQNEEDYSGGIEQCRDVPDCSLVASLINLRSKNLNLPLIKQISSTKYHVNLSFNGSNKRLVTVDISQIPTSVDGKQLSLKSNDISDKIGELALLLVSKGTYSTDGSNISIDTYRLSGFLPEITQVNSYPFEKLWKFHKSNLCLMGAGTGNRSNDMIKPLVENHDYSIIDITYDSRLVKLRDPRNSALNVEISYEQYLKNFKQLYLNWNQEKLFKRSQVLHFRYDTSRYNKFSIVADKPLFHLVNNSKVTETVWLLLESHLQDEGSQENRSVSFLNEAPECIICPIEPPVECGGNHIGLQLVKLRLDAETERLLYCYSTTNNNFSIHSFSVVKEICFQRLKDTKSLFAKVLFSFPYEIEGKASFDTCNFFQNPTFELEVHSEQDYQVLMDAACISTSSHDLINIQVYYFNDYELIKPIMFDNHYQPGQGLKQDVPILTNVKYMIVCSTYGPPASTEFELLASIRLSSSWRLISGITLRSVNLIYGTYPYHCRNRFHWKETSDKLKIQMTLPTKKYSTNKLFIRVVPVESSARLRMRCNIFEPESALCVYECQEYRTCPSGGIVIPDLEVSRTNIVVLMIERSVPISSCLPTEGQLDELELFVGSSQKIRIEKYSDDVIPK</sequence>
<organism>
    <name type="scientific">Saccharomyces cerevisiae (strain ATCC 204508 / S288c)</name>
    <name type="common">Baker's yeast</name>
    <dbReference type="NCBI Taxonomy" id="559292"/>
    <lineage>
        <taxon>Eukaryota</taxon>
        <taxon>Fungi</taxon>
        <taxon>Dikarya</taxon>
        <taxon>Ascomycota</taxon>
        <taxon>Saccharomycotina</taxon>
        <taxon>Saccharomycetes</taxon>
        <taxon>Saccharomycetales</taxon>
        <taxon>Saccharomycetaceae</taxon>
        <taxon>Saccharomyces</taxon>
    </lineage>
</organism>
<keyword id="KW-0378">Hydrolase</keyword>
<keyword id="KW-0645">Protease</keyword>
<keyword id="KW-1185">Reference proteome</keyword>
<keyword id="KW-0788">Thiol protease</keyword>
<accession>Q03792</accession>
<accession>D6VZX5</accession>
<protein>
    <recommendedName>
        <fullName>Calpain-like protease 1</fullName>
        <ecNumber>3.4.22.-</ecNumber>
    </recommendedName>
    <alternativeName>
        <fullName>Calpain-7</fullName>
    </alternativeName>
    <alternativeName>
        <fullName>Cysteine protease RIM13</fullName>
    </alternativeName>
    <alternativeName>
        <fullName>Regulator of IME2 protein 13</fullName>
    </alternativeName>
</protein>